<dbReference type="EC" id="1.14.99.48" evidence="1"/>
<dbReference type="EMBL" id="BX571856">
    <property type="protein sequence ID" value="CAG39194.1"/>
    <property type="molecule type" value="Genomic_DNA"/>
</dbReference>
<dbReference type="RefSeq" id="WP_000480605.1">
    <property type="nucleotide sequence ID" value="NC_002952.2"/>
</dbReference>
<dbReference type="SMR" id="Q6GKE0"/>
<dbReference type="KEGG" id="sar:SAR0167"/>
<dbReference type="HOGENOM" id="CLU_141544_2_1_9"/>
<dbReference type="Proteomes" id="UP000000596">
    <property type="component" value="Chromosome"/>
</dbReference>
<dbReference type="GO" id="GO:0005737">
    <property type="term" value="C:cytoplasm"/>
    <property type="evidence" value="ECO:0007669"/>
    <property type="project" value="UniProtKB-SubCell"/>
</dbReference>
<dbReference type="GO" id="GO:0020037">
    <property type="term" value="F:heme binding"/>
    <property type="evidence" value="ECO:0007669"/>
    <property type="project" value="UniProtKB-UniRule"/>
</dbReference>
<dbReference type="GO" id="GO:0004392">
    <property type="term" value="F:heme oxygenase (decyclizing) activity"/>
    <property type="evidence" value="ECO:0007669"/>
    <property type="project" value="UniProtKB-UniRule"/>
</dbReference>
<dbReference type="GO" id="GO:0005506">
    <property type="term" value="F:iron ion binding"/>
    <property type="evidence" value="ECO:0007669"/>
    <property type="project" value="UniProtKB-UniRule"/>
</dbReference>
<dbReference type="GO" id="GO:0042167">
    <property type="term" value="P:heme catabolic process"/>
    <property type="evidence" value="ECO:0007669"/>
    <property type="project" value="UniProtKB-UniRule"/>
</dbReference>
<dbReference type="GO" id="GO:0033212">
    <property type="term" value="P:iron import into cell"/>
    <property type="evidence" value="ECO:0007669"/>
    <property type="project" value="InterPro"/>
</dbReference>
<dbReference type="Gene3D" id="3.30.70.100">
    <property type="match status" value="1"/>
</dbReference>
<dbReference type="HAMAP" id="MF_01272">
    <property type="entry name" value="Heme_degrading_monooxygenase"/>
    <property type="match status" value="1"/>
</dbReference>
<dbReference type="InterPro" id="IPR007138">
    <property type="entry name" value="ABM_dom"/>
</dbReference>
<dbReference type="InterPro" id="IPR011008">
    <property type="entry name" value="Dimeric_a/b-barrel"/>
</dbReference>
<dbReference type="InterPro" id="IPR050404">
    <property type="entry name" value="Heme-degrading_MO"/>
</dbReference>
<dbReference type="InterPro" id="IPR023953">
    <property type="entry name" value="IsdG"/>
</dbReference>
<dbReference type="NCBIfam" id="NF009838">
    <property type="entry name" value="PRK13313.1"/>
    <property type="match status" value="1"/>
</dbReference>
<dbReference type="PANTHER" id="PTHR34474:SF4">
    <property type="entry name" value="HEME OXYGENASE (STAPHYLOBILIN-PRODUCING) 1"/>
    <property type="match status" value="1"/>
</dbReference>
<dbReference type="PANTHER" id="PTHR34474">
    <property type="entry name" value="SIGNAL TRANSDUCTION PROTEIN TRAP"/>
    <property type="match status" value="1"/>
</dbReference>
<dbReference type="Pfam" id="PF03992">
    <property type="entry name" value="ABM"/>
    <property type="match status" value="1"/>
</dbReference>
<dbReference type="SUPFAM" id="SSF54909">
    <property type="entry name" value="Dimeric alpha+beta barrel"/>
    <property type="match status" value="1"/>
</dbReference>
<dbReference type="PROSITE" id="PS51725">
    <property type="entry name" value="ABM"/>
    <property type="match status" value="1"/>
</dbReference>
<feature type="chain" id="PRO_0000270084" description="Heme oxygenase (staphylobilin-producing) 2">
    <location>
        <begin position="1"/>
        <end position="108"/>
    </location>
</feature>
<feature type="domain" description="ABM" evidence="1">
    <location>
        <begin position="2"/>
        <end position="93"/>
    </location>
</feature>
<feature type="binding site" evidence="1">
    <location>
        <position position="6"/>
    </location>
    <ligand>
        <name>Fe cation</name>
        <dbReference type="ChEBI" id="CHEBI:24875"/>
    </ligand>
</feature>
<feature type="binding site" evidence="1">
    <location>
        <begin position="21"/>
        <end position="28"/>
    </location>
    <ligand>
        <name>heme</name>
        <dbReference type="ChEBI" id="CHEBI:30413"/>
    </ligand>
</feature>
<feature type="binding site" description="axial binding residue" evidence="1">
    <location>
        <position position="76"/>
    </location>
    <ligand>
        <name>heme</name>
        <dbReference type="ChEBI" id="CHEBI:30413"/>
    </ligand>
    <ligandPart>
        <name>Fe</name>
        <dbReference type="ChEBI" id="CHEBI:18248"/>
    </ligandPart>
</feature>
<feature type="site" description="Transition state stabilizer" evidence="1">
    <location>
        <position position="66"/>
    </location>
</feature>
<reference key="1">
    <citation type="journal article" date="2004" name="Proc. Natl. Acad. Sci. U.S.A.">
        <title>Complete genomes of two clinical Staphylococcus aureus strains: evidence for the rapid evolution of virulence and drug resistance.</title>
        <authorList>
            <person name="Holden M.T.G."/>
            <person name="Feil E.J."/>
            <person name="Lindsay J.A."/>
            <person name="Peacock S.J."/>
            <person name="Day N.P.J."/>
            <person name="Enright M.C."/>
            <person name="Foster T.J."/>
            <person name="Moore C.E."/>
            <person name="Hurst L."/>
            <person name="Atkin R."/>
            <person name="Barron A."/>
            <person name="Bason N."/>
            <person name="Bentley S.D."/>
            <person name="Chillingworth C."/>
            <person name="Chillingworth T."/>
            <person name="Churcher C."/>
            <person name="Clark L."/>
            <person name="Corton C."/>
            <person name="Cronin A."/>
            <person name="Doggett J."/>
            <person name="Dowd L."/>
            <person name="Feltwell T."/>
            <person name="Hance Z."/>
            <person name="Harris B."/>
            <person name="Hauser H."/>
            <person name="Holroyd S."/>
            <person name="Jagels K."/>
            <person name="James K.D."/>
            <person name="Lennard N."/>
            <person name="Line A."/>
            <person name="Mayes R."/>
            <person name="Moule S."/>
            <person name="Mungall K."/>
            <person name="Ormond D."/>
            <person name="Quail M.A."/>
            <person name="Rabbinowitsch E."/>
            <person name="Rutherford K.M."/>
            <person name="Sanders M."/>
            <person name="Sharp S."/>
            <person name="Simmonds M."/>
            <person name="Stevens K."/>
            <person name="Whitehead S."/>
            <person name="Barrell B.G."/>
            <person name="Spratt B.G."/>
            <person name="Parkhill J."/>
        </authorList>
    </citation>
    <scope>NUCLEOTIDE SEQUENCE [LARGE SCALE GENOMIC DNA]</scope>
    <source>
        <strain>MRSA252</strain>
    </source>
</reference>
<protein>
    <recommendedName>
        <fullName evidence="1">Heme oxygenase (staphylobilin-producing) 2</fullName>
        <ecNumber evidence="1">1.14.99.48</ecNumber>
    </recommendedName>
    <alternativeName>
        <fullName evidence="1">Heme-degrading monooxygenase 2</fullName>
    </alternativeName>
    <alternativeName>
        <fullName evidence="1">Iron-regulated surface determinant 2</fullName>
    </alternativeName>
    <alternativeName>
        <fullName evidence="1">Iron-responsive surface determinant 2</fullName>
    </alternativeName>
</protein>
<sequence length="108" mass="12790">MFMAENRLQLQKGSAEETIERFYNRQGIETIEGFQQMFVTKTLNTKDTDEVKILTIWESEDSFNNWLNSDVFKEAHKNVRLKSDDDGQQSPILSNKVFKYDIGYHYQK</sequence>
<accession>Q6GKE0</accession>
<gene>
    <name type="primary">isdI</name>
    <name type="ordered locus">SAR0167</name>
</gene>
<organism>
    <name type="scientific">Staphylococcus aureus (strain MRSA252)</name>
    <dbReference type="NCBI Taxonomy" id="282458"/>
    <lineage>
        <taxon>Bacteria</taxon>
        <taxon>Bacillati</taxon>
        <taxon>Bacillota</taxon>
        <taxon>Bacilli</taxon>
        <taxon>Bacillales</taxon>
        <taxon>Staphylococcaceae</taxon>
        <taxon>Staphylococcus</taxon>
    </lineage>
</organism>
<name>HDOX2_STAAR</name>
<evidence type="ECO:0000255" key="1">
    <source>
        <dbReference type="HAMAP-Rule" id="MF_01272"/>
    </source>
</evidence>
<comment type="function">
    <text evidence="1">Allows bacterial pathogens to use the host heme as an iron source. Catalyzes the oxidative degradation of the heme macrocyclic porphyrin ring to the oxo-bilirubin chromophore staphylobilin (a mixture of the linear tetrapyrroles 5-oxo-delta-bilirubin and 15-oxo-beta-bilirubin) in the presence of a suitable electron donor such as ascorbate or NADPH--cytochrome P450 reductase, with subsequent release of free iron.</text>
</comment>
<comment type="catalytic activity">
    <reaction evidence="1">
        <text>heme b + 5 AH2 + 4 O2 + 2 H(+) = delta-staphylobilin + Fe(2+) + formaldehyde + 5 A + 4 H2O</text>
        <dbReference type="Rhea" id="RHEA:37039"/>
        <dbReference type="ChEBI" id="CHEBI:13193"/>
        <dbReference type="ChEBI" id="CHEBI:15377"/>
        <dbReference type="ChEBI" id="CHEBI:15378"/>
        <dbReference type="ChEBI" id="CHEBI:15379"/>
        <dbReference type="ChEBI" id="CHEBI:16842"/>
        <dbReference type="ChEBI" id="CHEBI:17499"/>
        <dbReference type="ChEBI" id="CHEBI:29033"/>
        <dbReference type="ChEBI" id="CHEBI:60344"/>
        <dbReference type="ChEBI" id="CHEBI:74361"/>
        <dbReference type="EC" id="1.14.99.48"/>
    </reaction>
</comment>
<comment type="catalytic activity">
    <reaction evidence="1">
        <text>heme b + 5 AH2 + 4 O2 + 2 H(+) = beta-staphylobilin + Fe(2+) + formaldehyde + 5 A + 4 H2O</text>
        <dbReference type="Rhea" id="RHEA:37363"/>
        <dbReference type="ChEBI" id="CHEBI:13193"/>
        <dbReference type="ChEBI" id="CHEBI:15377"/>
        <dbReference type="ChEBI" id="CHEBI:15378"/>
        <dbReference type="ChEBI" id="CHEBI:15379"/>
        <dbReference type="ChEBI" id="CHEBI:16842"/>
        <dbReference type="ChEBI" id="CHEBI:17499"/>
        <dbReference type="ChEBI" id="CHEBI:29033"/>
        <dbReference type="ChEBI" id="CHEBI:60344"/>
        <dbReference type="ChEBI" id="CHEBI:74362"/>
        <dbReference type="EC" id="1.14.99.48"/>
    </reaction>
</comment>
<comment type="subunit">
    <text evidence="1">Homodimer.</text>
</comment>
<comment type="subcellular location">
    <subcellularLocation>
        <location evidence="1">Cytoplasm</location>
    </subcellularLocation>
</comment>
<comment type="similarity">
    <text evidence="1">Belongs to the antibiotic biosynthesis monooxygenase family. Heme-degrading monooxygenase IsdG subfamily.</text>
</comment>
<keyword id="KW-0963">Cytoplasm</keyword>
<keyword id="KW-0349">Heme</keyword>
<keyword id="KW-0408">Iron</keyword>
<keyword id="KW-0479">Metal-binding</keyword>
<keyword id="KW-0503">Monooxygenase</keyword>
<keyword id="KW-0560">Oxidoreductase</keyword>
<proteinExistence type="inferred from homology"/>